<organism>
    <name type="scientific">Rattus norvegicus</name>
    <name type="common">Rat</name>
    <dbReference type="NCBI Taxonomy" id="10116"/>
    <lineage>
        <taxon>Eukaryota</taxon>
        <taxon>Metazoa</taxon>
        <taxon>Chordata</taxon>
        <taxon>Craniata</taxon>
        <taxon>Vertebrata</taxon>
        <taxon>Euteleostomi</taxon>
        <taxon>Mammalia</taxon>
        <taxon>Eutheria</taxon>
        <taxon>Euarchontoglires</taxon>
        <taxon>Glires</taxon>
        <taxon>Rodentia</taxon>
        <taxon>Myomorpha</taxon>
        <taxon>Muroidea</taxon>
        <taxon>Muridae</taxon>
        <taxon>Murinae</taxon>
        <taxon>Rattus</taxon>
    </lineage>
</organism>
<sequence>MDPAERAQAARARVPRIDPYGFERPEDFDYAAYEEFFSTYLVILTKRAIKWSKLLKGSGGVRKSVTDLNRTFPDNVMFRKTADPCLQKTLYNVLLAYGLHNQDVGYCQGMNFIAGYLILITKNEEESFWLLDALVGRILPDYYSPAMLGLKTDQEVLAELVRMKLPAVAALMDGHGVLWTLLVSRWFICLFVDILPVETVLRIWDCLFNEGSKIIFRVALTLIKQHQEFILEASSVPDICDKFKQITKGDFVTECHTFMQKIFSEPGSLSMATITRLRESCRAALQAQS</sequence>
<accession>Q4QQU7</accession>
<reference key="1">
    <citation type="journal article" date="2004" name="Genome Res.">
        <title>The status, quality, and expansion of the NIH full-length cDNA project: the Mammalian Gene Collection (MGC).</title>
        <authorList>
            <consortium name="The MGC Project Team"/>
        </authorList>
    </citation>
    <scope>NUCLEOTIDE SEQUENCE [LARGE SCALE MRNA]</scope>
    <source>
        <tissue>Placenta</tissue>
    </source>
</reference>
<keyword id="KW-0343">GTPase activation</keyword>
<keyword id="KW-1185">Reference proteome</keyword>
<proteinExistence type="evidence at transcript level"/>
<comment type="function">
    <text>May act as a GTPase-activating protein for Rab family protein(s).</text>
</comment>
<feature type="chain" id="PRO_0000288710" description="Growth hormone-regulated TBC protein 1">
    <location>
        <begin position="1"/>
        <end position="289"/>
    </location>
</feature>
<feature type="domain" description="Rab-GAP TBC" evidence="1">
    <location>
        <begin position="41"/>
        <end position="211"/>
    </location>
</feature>
<gene>
    <name type="primary">Grtp1</name>
</gene>
<name>GRTP1_RAT</name>
<evidence type="ECO:0000255" key="1">
    <source>
        <dbReference type="PROSITE-ProRule" id="PRU00163"/>
    </source>
</evidence>
<protein>
    <recommendedName>
        <fullName>Growth hormone-regulated TBC protein 1</fullName>
    </recommendedName>
</protein>
<dbReference type="EMBL" id="BC097985">
    <property type="protein sequence ID" value="AAH97985.1"/>
    <property type="molecule type" value="mRNA"/>
</dbReference>
<dbReference type="RefSeq" id="NP_001026983.1">
    <property type="nucleotide sequence ID" value="NM_001031813.2"/>
</dbReference>
<dbReference type="SMR" id="Q4QQU7"/>
<dbReference type="FunCoup" id="Q4QQU7">
    <property type="interactions" value="77"/>
</dbReference>
<dbReference type="STRING" id="10116.ENSRNOP00000065337"/>
<dbReference type="PhosphoSitePlus" id="Q4QQU7"/>
<dbReference type="PaxDb" id="10116-ENSRNOP00000054552"/>
<dbReference type="GeneID" id="361180"/>
<dbReference type="KEGG" id="rno:361180"/>
<dbReference type="UCSC" id="RGD:1309210">
    <property type="organism name" value="rat"/>
</dbReference>
<dbReference type="AGR" id="RGD:1309210"/>
<dbReference type="CTD" id="79774"/>
<dbReference type="RGD" id="1309210">
    <property type="gene designation" value="Grtp1"/>
</dbReference>
<dbReference type="VEuPathDB" id="HostDB:ENSRNOG00000019504"/>
<dbReference type="HOGENOM" id="CLU_005350_1_0_1"/>
<dbReference type="InParanoid" id="Q4QQU7"/>
<dbReference type="PRO" id="PR:Q4QQU7"/>
<dbReference type="Proteomes" id="UP000002494">
    <property type="component" value="Chromosome 16"/>
</dbReference>
<dbReference type="Bgee" id="ENSRNOG00000061995">
    <property type="expression patterns" value="Expressed in adult mammalian kidney and 18 other cell types or tissues"/>
</dbReference>
<dbReference type="ExpressionAtlas" id="Q4QQU7">
    <property type="expression patterns" value="baseline"/>
</dbReference>
<dbReference type="GO" id="GO:0005737">
    <property type="term" value="C:cytoplasm"/>
    <property type="evidence" value="ECO:0000318"/>
    <property type="project" value="GO_Central"/>
</dbReference>
<dbReference type="GO" id="GO:0005886">
    <property type="term" value="C:plasma membrane"/>
    <property type="evidence" value="ECO:0000318"/>
    <property type="project" value="GO_Central"/>
</dbReference>
<dbReference type="GO" id="GO:0005096">
    <property type="term" value="F:GTPase activator activity"/>
    <property type="evidence" value="ECO:0000318"/>
    <property type="project" value="GO_Central"/>
</dbReference>
<dbReference type="FunFam" id="1.10.472.80:FF:000029">
    <property type="entry name" value="Growth hormone-regulated TBC protein 1"/>
    <property type="match status" value="1"/>
</dbReference>
<dbReference type="FunFam" id="1.10.8.270:FF:000016">
    <property type="entry name" value="TBC1 domain family member 2A"/>
    <property type="match status" value="1"/>
</dbReference>
<dbReference type="Gene3D" id="1.10.8.270">
    <property type="entry name" value="putative rabgap domain of human tbc1 domain family member 14 like domains"/>
    <property type="match status" value="1"/>
</dbReference>
<dbReference type="Gene3D" id="1.10.472.80">
    <property type="entry name" value="Ypt/Rab-GAP domain of gyp1p, domain 3"/>
    <property type="match status" value="1"/>
</dbReference>
<dbReference type="InterPro" id="IPR000195">
    <property type="entry name" value="Rab-GAP-TBC_dom"/>
</dbReference>
<dbReference type="InterPro" id="IPR035969">
    <property type="entry name" value="Rab-GAP_TBC_sf"/>
</dbReference>
<dbReference type="InterPro" id="IPR050302">
    <property type="entry name" value="Rab_GAP_TBC_domain"/>
</dbReference>
<dbReference type="PANTHER" id="PTHR47219:SF10">
    <property type="entry name" value="GROWTH HORMONE-REGULATED TBC PROTEIN 1"/>
    <property type="match status" value="1"/>
</dbReference>
<dbReference type="PANTHER" id="PTHR47219">
    <property type="entry name" value="RAB GTPASE-ACTIVATING PROTEIN 1-LIKE"/>
    <property type="match status" value="1"/>
</dbReference>
<dbReference type="Pfam" id="PF00566">
    <property type="entry name" value="RabGAP-TBC"/>
    <property type="match status" value="1"/>
</dbReference>
<dbReference type="SMART" id="SM00164">
    <property type="entry name" value="TBC"/>
    <property type="match status" value="1"/>
</dbReference>
<dbReference type="SUPFAM" id="SSF47923">
    <property type="entry name" value="Ypt/Rab-GAP domain of gyp1p"/>
    <property type="match status" value="2"/>
</dbReference>
<dbReference type="PROSITE" id="PS50086">
    <property type="entry name" value="TBC_RABGAP"/>
    <property type="match status" value="1"/>
</dbReference>